<dbReference type="EMBL" id="CR859998">
    <property type="protein sequence ID" value="CAH92149.1"/>
    <property type="molecule type" value="mRNA"/>
</dbReference>
<dbReference type="RefSeq" id="NP_001126258.1">
    <property type="nucleotide sequence ID" value="NM_001132786.1"/>
</dbReference>
<dbReference type="SMR" id="Q5R7W1"/>
<dbReference type="STRING" id="9601.ENSPPYP00000017559"/>
<dbReference type="GeneID" id="100173230"/>
<dbReference type="KEGG" id="pon:100173230"/>
<dbReference type="CTD" id="9140"/>
<dbReference type="eggNOG" id="KOG3439">
    <property type="taxonomic scope" value="Eukaryota"/>
</dbReference>
<dbReference type="InParanoid" id="Q5R7W1"/>
<dbReference type="OrthoDB" id="10003551at2759"/>
<dbReference type="Proteomes" id="UP000001595">
    <property type="component" value="Unplaced"/>
</dbReference>
<dbReference type="GO" id="GO:0034274">
    <property type="term" value="C:Atg12-Atg5-Atg16 complex"/>
    <property type="evidence" value="ECO:0007669"/>
    <property type="project" value="TreeGrafter"/>
</dbReference>
<dbReference type="GO" id="GO:0000421">
    <property type="term" value="C:autophagosome membrane"/>
    <property type="evidence" value="ECO:0007669"/>
    <property type="project" value="TreeGrafter"/>
</dbReference>
<dbReference type="GO" id="GO:0034045">
    <property type="term" value="C:phagophore assembly site membrane"/>
    <property type="evidence" value="ECO:0007669"/>
    <property type="project" value="UniProtKB-SubCell"/>
</dbReference>
<dbReference type="GO" id="GO:0019776">
    <property type="term" value="F:Atg8-family ligase activity"/>
    <property type="evidence" value="ECO:0007669"/>
    <property type="project" value="TreeGrafter"/>
</dbReference>
<dbReference type="GO" id="GO:0000045">
    <property type="term" value="P:autophagosome assembly"/>
    <property type="evidence" value="ECO:0007669"/>
    <property type="project" value="InterPro"/>
</dbReference>
<dbReference type="GO" id="GO:0097352">
    <property type="term" value="P:autophagosome maturation"/>
    <property type="evidence" value="ECO:0007669"/>
    <property type="project" value="TreeGrafter"/>
</dbReference>
<dbReference type="GO" id="GO:0000422">
    <property type="term" value="P:autophagy of mitochondrion"/>
    <property type="evidence" value="ECO:0007669"/>
    <property type="project" value="TreeGrafter"/>
</dbReference>
<dbReference type="GO" id="GO:0061723">
    <property type="term" value="P:glycophagy"/>
    <property type="evidence" value="ECO:0007669"/>
    <property type="project" value="TreeGrafter"/>
</dbReference>
<dbReference type="GO" id="GO:0045087">
    <property type="term" value="P:innate immune response"/>
    <property type="evidence" value="ECO:0007669"/>
    <property type="project" value="UniProtKB-KW"/>
</dbReference>
<dbReference type="GO" id="GO:0034727">
    <property type="term" value="P:piecemeal microautophagy of the nucleus"/>
    <property type="evidence" value="ECO:0007669"/>
    <property type="project" value="TreeGrafter"/>
</dbReference>
<dbReference type="CDD" id="cd01612">
    <property type="entry name" value="Ubl_ATG12"/>
    <property type="match status" value="1"/>
</dbReference>
<dbReference type="FunFam" id="3.10.20.90:FF:000117">
    <property type="entry name" value="Ubiquitin-like protein ATG12"/>
    <property type="match status" value="1"/>
</dbReference>
<dbReference type="Gene3D" id="3.10.20.90">
    <property type="entry name" value="Phosphatidylinositol 3-kinase Catalytic Subunit, Chain A, domain 1"/>
    <property type="match status" value="1"/>
</dbReference>
<dbReference type="InterPro" id="IPR007242">
    <property type="entry name" value="Atg12"/>
</dbReference>
<dbReference type="InterPro" id="IPR029071">
    <property type="entry name" value="Ubiquitin-like_domsf"/>
</dbReference>
<dbReference type="PANTHER" id="PTHR13385">
    <property type="entry name" value="AUTOPHAGY PROTEIN 12"/>
    <property type="match status" value="1"/>
</dbReference>
<dbReference type="PANTHER" id="PTHR13385:SF0">
    <property type="entry name" value="UBIQUITIN-LIKE PROTEIN ATG12"/>
    <property type="match status" value="1"/>
</dbReference>
<dbReference type="Pfam" id="PF04110">
    <property type="entry name" value="APG12"/>
    <property type="match status" value="1"/>
</dbReference>
<dbReference type="SUPFAM" id="SSF54236">
    <property type="entry name" value="Ubiquitin-like"/>
    <property type="match status" value="1"/>
</dbReference>
<proteinExistence type="evidence at transcript level"/>
<organism>
    <name type="scientific">Pongo abelii</name>
    <name type="common">Sumatran orangutan</name>
    <name type="synonym">Pongo pygmaeus abelii</name>
    <dbReference type="NCBI Taxonomy" id="9601"/>
    <lineage>
        <taxon>Eukaryota</taxon>
        <taxon>Metazoa</taxon>
        <taxon>Chordata</taxon>
        <taxon>Craniata</taxon>
        <taxon>Vertebrata</taxon>
        <taxon>Euteleostomi</taxon>
        <taxon>Mammalia</taxon>
        <taxon>Eutheria</taxon>
        <taxon>Euarchontoglires</taxon>
        <taxon>Primates</taxon>
        <taxon>Haplorrhini</taxon>
        <taxon>Catarrhini</taxon>
        <taxon>Hominidae</taxon>
        <taxon>Pongo</taxon>
    </lineage>
</organism>
<reference key="1">
    <citation type="submission" date="2004-11" db="EMBL/GenBank/DDBJ databases">
        <authorList>
            <consortium name="The German cDNA consortium"/>
        </authorList>
    </citation>
    <scope>NUCLEOTIDE SEQUENCE [LARGE SCALE MRNA]</scope>
    <source>
        <tissue>Brain cortex</tissue>
    </source>
</reference>
<name>ATG12_PONAB</name>
<keyword id="KW-0007">Acetylation</keyword>
<keyword id="KW-0072">Autophagy</keyword>
<keyword id="KW-0963">Cytoplasm</keyword>
<keyword id="KW-0391">Immunity</keyword>
<keyword id="KW-0399">Innate immunity</keyword>
<keyword id="KW-1017">Isopeptide bond</keyword>
<keyword id="KW-0472">Membrane</keyword>
<keyword id="KW-1185">Reference proteome</keyword>
<keyword id="KW-0833">Ubl conjugation pathway</keyword>
<evidence type="ECO:0000250" key="1"/>
<evidence type="ECO:0000250" key="2">
    <source>
        <dbReference type="UniProtKB" id="O94817"/>
    </source>
</evidence>
<evidence type="ECO:0000250" key="3">
    <source>
        <dbReference type="UniProtKB" id="Q9CQY1"/>
    </source>
</evidence>
<evidence type="ECO:0000256" key="4">
    <source>
        <dbReference type="SAM" id="MobiDB-lite"/>
    </source>
</evidence>
<evidence type="ECO:0000305" key="5"/>
<gene>
    <name evidence="2" type="primary">ATG12</name>
    <name type="synonym">APG12</name>
    <name type="synonym">APG12L</name>
</gene>
<protein>
    <recommendedName>
        <fullName evidence="2">Ubiquitin-like protein ATG12</fullName>
    </recommendedName>
    <alternativeName>
        <fullName>Autophagy-related protein 12</fullName>
        <shortName>APG12-like</shortName>
    </alternativeName>
</protein>
<sequence>MAEEPQTVLQLPPSSAAGGEGLTDVSPETTTPEPPSSAAVSPGTEEPAGDTKKKIDILLKAVGDTPIMKTKKWAVERTRTIQGPIDFIKKFLKLVASEQLFIYVNQSFAPSPDQEVGTLYECFGSDGKLVLHYCKSQAWG</sequence>
<comment type="function">
    <text evidence="1 3">Ubiquitin-like protein involved in autophagy vesicles formation. Conjugation with ATG5 through a ubiquitin-like conjugating system involving also ATG7 as an E1-like activating enzyme and ATG10 as an E2-like conjugating enzyme, is essential for its function. The ATG12-ATG5 conjugate acts as an E3-like enzyme which is required for lipidation of ATG8 family proteins and their association to the vesicle membranes. The ATG12-ATG5 conjugate also negatively regulates the innate antiviral immune response by blocking the type I IFN production pathway through direct association with RARRES3 and MAVS. Also plays a role in translation or delivery of incoming viral RNA to the translation apparatus (By similarity). As part of the ATG8 conjugation system with ATG5 and ATG16L1, required for recruitment of LRRK2 to stressed lysosomes and induction of LRRK2 kinase activity in response to lysosomal stress (By similarity).</text>
</comment>
<comment type="subunit">
    <text evidence="2 3">Forms a conjugate with ATG5. Part of the minor complex composed of 4 sets of ATG12-ATG5 and ATG16L1 (400 kDa); this complex interacts with ATG3 leading to disruption of ATG7 interaction and promotion of ATG8-like proteins lipidation (By similarity). Forms an 800-kDa complex composed of ATG12-ATG5 and ATG16L2 (By similarity). Interacts with DHX58/RIG-1, IFIH1/MDA5 and MAVS/IPS-1 in monomeric form as well as in ATG12-ATG5 conjugate. The interaction with MAVS is further enhanced upon vesicular stomatitis virus (VSV) infection. Interacts with ATG3; this interaction is essential for phosphatidylethanolamine (PE)-conjugated ATG8-like proteins formation (By similarity). Interacts with ATG7 (By similarity). Interacts with ATG10 (By similarity). Interacts with TECPR1. Interacts with SH3BGRL (By similarity). The ATG12-ATG5 conjugate interacts with PDCD6IP (via the BRO1 domain); this interaction is bridged by ATG12 and promotes multiple PDCD6IP-mediated functions such as endolysosomal trafficking, macroautophagy and exosome biogenesis (By similarity).</text>
</comment>
<comment type="subcellular location">
    <subcellularLocation>
        <location evidence="1">Cytoplasm</location>
    </subcellularLocation>
    <subcellularLocation>
        <location evidence="1">Preautophagosomal structure membrane</location>
        <topology evidence="1">Peripheral membrane protein</topology>
    </subcellularLocation>
    <text evidence="1">TECPR1 recruits the ATG12-ATG5 conjugate to the autolysosomal membrane.</text>
</comment>
<comment type="domain">
    <text evidence="1">Shares weak sequence similarity with ubiquitin family, but contains an 'ubiquitin superfold' and the C-terminal Gly is required for isopeptide linkage.</text>
</comment>
<comment type="PTM">
    <text evidence="1">Acetylated by EP300.</text>
</comment>
<comment type="similarity">
    <text evidence="5">Belongs to the ATG12 family.</text>
</comment>
<accession>Q5R7W1</accession>
<feature type="chain" id="PRO_0000212473" description="Ubiquitin-like protein ATG12">
    <location>
        <begin position="1"/>
        <end position="140"/>
    </location>
</feature>
<feature type="region of interest" description="Disordered" evidence="4">
    <location>
        <begin position="1"/>
        <end position="52"/>
    </location>
</feature>
<feature type="compositionally biased region" description="Low complexity" evidence="4">
    <location>
        <begin position="25"/>
        <end position="42"/>
    </location>
</feature>
<feature type="cross-link" description="Glycyl lysine isopeptide (Gly-Lys) (interchain with K-? in acceptor protein)" evidence="1">
    <location>
        <position position="140"/>
    </location>
</feature>